<evidence type="ECO:0000269" key="1">
    <source>
    </source>
</evidence>
<evidence type="ECO:0000303" key="2">
    <source>
    </source>
</evidence>
<evidence type="ECO:0000305" key="3">
    <source>
    </source>
</evidence>
<evidence type="ECO:0000312" key="4">
    <source>
        <dbReference type="Araport" id="AT5G24350"/>
    </source>
</evidence>
<evidence type="ECO:0000312" key="5">
    <source>
        <dbReference type="EMBL" id="BAB11228.1"/>
    </source>
</evidence>
<gene>
    <name evidence="2" type="primary">MIP2</name>
    <name evidence="4" type="ordered locus">At5g24350</name>
    <name evidence="5" type="ORF">K16H17.4</name>
</gene>
<dbReference type="EMBL" id="AB016884">
    <property type="protein sequence ID" value="BAB11228.1"/>
    <property type="molecule type" value="Genomic_DNA"/>
</dbReference>
<dbReference type="EMBL" id="CP002688">
    <property type="protein sequence ID" value="AED93296.1"/>
    <property type="molecule type" value="Genomic_DNA"/>
</dbReference>
<dbReference type="EMBL" id="CP002688">
    <property type="protein sequence ID" value="ANM69227.1"/>
    <property type="molecule type" value="Genomic_DNA"/>
</dbReference>
<dbReference type="RefSeq" id="NP_001318636.1">
    <molecule id="Q9FIN7-1"/>
    <property type="nucleotide sequence ID" value="NM_001343876.1"/>
</dbReference>
<dbReference type="RefSeq" id="NP_197823.1">
    <molecule id="Q9FIN7-1"/>
    <property type="nucleotide sequence ID" value="NM_122343.3"/>
</dbReference>
<dbReference type="BioGRID" id="17780">
    <property type="interactions" value="3"/>
</dbReference>
<dbReference type="FunCoup" id="Q9FIN7">
    <property type="interactions" value="3657"/>
</dbReference>
<dbReference type="STRING" id="3702.Q9FIN7"/>
<dbReference type="GlyGen" id="Q9FIN7">
    <property type="glycosylation" value="1 site"/>
</dbReference>
<dbReference type="iPTMnet" id="Q9FIN7"/>
<dbReference type="PaxDb" id="3702-AT5G24350.2"/>
<dbReference type="ProteomicsDB" id="250707">
    <molecule id="Q9FIN7-1"/>
</dbReference>
<dbReference type="EnsemblPlants" id="AT5G24350.1">
    <molecule id="Q9FIN7-1"/>
    <property type="protein sequence ID" value="AT5G24350.1"/>
    <property type="gene ID" value="AT5G24350"/>
</dbReference>
<dbReference type="EnsemblPlants" id="AT5G24350.3">
    <molecule id="Q9FIN7-1"/>
    <property type="protein sequence ID" value="AT5G24350.3"/>
    <property type="gene ID" value="AT5G24350"/>
</dbReference>
<dbReference type="GeneID" id="832505"/>
<dbReference type="Gramene" id="AT5G24350.1">
    <molecule id="Q9FIN7-1"/>
    <property type="protein sequence ID" value="AT5G24350.1"/>
    <property type="gene ID" value="AT5G24350"/>
</dbReference>
<dbReference type="Gramene" id="AT5G24350.3">
    <molecule id="Q9FIN7-1"/>
    <property type="protein sequence ID" value="AT5G24350.3"/>
    <property type="gene ID" value="AT5G24350"/>
</dbReference>
<dbReference type="KEGG" id="ath:AT5G24350"/>
<dbReference type="Araport" id="AT5G24350"/>
<dbReference type="TAIR" id="AT5G24350">
    <property type="gene designation" value="MIP2"/>
</dbReference>
<dbReference type="eggNOG" id="KOG1797">
    <property type="taxonomic scope" value="Eukaryota"/>
</dbReference>
<dbReference type="HOGENOM" id="CLU_001017_0_0_1"/>
<dbReference type="InParanoid" id="Q9FIN7"/>
<dbReference type="PhylomeDB" id="Q9FIN7"/>
<dbReference type="PRO" id="PR:Q9FIN7"/>
<dbReference type="Proteomes" id="UP000006548">
    <property type="component" value="Chromosome 5"/>
</dbReference>
<dbReference type="ExpressionAtlas" id="Q9FIN7">
    <property type="expression patterns" value="baseline and differential"/>
</dbReference>
<dbReference type="GO" id="GO:0005789">
    <property type="term" value="C:endoplasmic reticulum membrane"/>
    <property type="evidence" value="ECO:0007669"/>
    <property type="project" value="UniProtKB-SubCell"/>
</dbReference>
<dbReference type="GO" id="GO:0005773">
    <property type="term" value="C:vacuole"/>
    <property type="evidence" value="ECO:0007669"/>
    <property type="project" value="GOC"/>
</dbReference>
<dbReference type="GO" id="GO:0051604">
    <property type="term" value="P:protein maturation"/>
    <property type="evidence" value="ECO:0000315"/>
    <property type="project" value="UniProtKB"/>
</dbReference>
<dbReference type="GO" id="GO:0015031">
    <property type="term" value="P:protein transport"/>
    <property type="evidence" value="ECO:0007669"/>
    <property type="project" value="UniProtKB-KW"/>
</dbReference>
<dbReference type="GO" id="GO:0006890">
    <property type="term" value="P:retrograde vesicle-mediated transport, Golgi to endoplasmic reticulum"/>
    <property type="evidence" value="ECO:0007669"/>
    <property type="project" value="InterPro"/>
</dbReference>
<dbReference type="GO" id="GO:0006624">
    <property type="term" value="P:vacuolar protein processing"/>
    <property type="evidence" value="ECO:0000304"/>
    <property type="project" value="UniProtKB"/>
</dbReference>
<dbReference type="Gene3D" id="2.130.10.10">
    <property type="entry name" value="YVTN repeat-like/Quinoprotein amine dehydrogenase"/>
    <property type="match status" value="1"/>
</dbReference>
<dbReference type="InterPro" id="IPR055403">
    <property type="entry name" value="ARM_KNTC1_1st"/>
</dbReference>
<dbReference type="InterPro" id="IPR013244">
    <property type="entry name" value="Sec39_domain"/>
</dbReference>
<dbReference type="InterPro" id="IPR015943">
    <property type="entry name" value="WD40/YVTN_repeat-like_dom_sf"/>
</dbReference>
<dbReference type="InterPro" id="IPR036322">
    <property type="entry name" value="WD40_repeat_dom_sf"/>
</dbReference>
<dbReference type="PANTHER" id="PTHR15922:SF2">
    <property type="entry name" value="NBAS SUBUNIT OF NRZ TETHERING COMPLEX"/>
    <property type="match status" value="1"/>
</dbReference>
<dbReference type="PANTHER" id="PTHR15922">
    <property type="entry name" value="NEUROBLASTOMA-AMPLIFIED SEQUENCE"/>
    <property type="match status" value="1"/>
</dbReference>
<dbReference type="Pfam" id="PF24520">
    <property type="entry name" value="ARM_KNTC1_1st"/>
    <property type="match status" value="1"/>
</dbReference>
<dbReference type="Pfam" id="PF08314">
    <property type="entry name" value="Sec39"/>
    <property type="match status" value="1"/>
</dbReference>
<dbReference type="SUPFAM" id="SSF50978">
    <property type="entry name" value="WD40 repeat-like"/>
    <property type="match status" value="1"/>
</dbReference>
<organism>
    <name type="scientific">Arabidopsis thaliana</name>
    <name type="common">Mouse-ear cress</name>
    <dbReference type="NCBI Taxonomy" id="3702"/>
    <lineage>
        <taxon>Eukaryota</taxon>
        <taxon>Viridiplantae</taxon>
        <taxon>Streptophyta</taxon>
        <taxon>Embryophyta</taxon>
        <taxon>Tracheophyta</taxon>
        <taxon>Spermatophyta</taxon>
        <taxon>Magnoliopsida</taxon>
        <taxon>eudicotyledons</taxon>
        <taxon>Gunneridae</taxon>
        <taxon>Pentapetalae</taxon>
        <taxon>rosids</taxon>
        <taxon>malvids</taxon>
        <taxon>Brassicales</taxon>
        <taxon>Brassicaceae</taxon>
        <taxon>Camelineae</taxon>
        <taxon>Arabidopsis</taxon>
    </lineage>
</organism>
<name>MIP2_ARATH</name>
<accession>Q9FIN7</accession>
<feature type="chain" id="PRO_0000430534" description="MAG2-interacting protein 2">
    <location>
        <begin position="1"/>
        <end position="2376"/>
    </location>
</feature>
<protein>
    <recommendedName>
        <fullName evidence="2">MAG2-interacting protein 2</fullName>
    </recommendedName>
</protein>
<reference key="1">
    <citation type="journal article" date="1998" name="DNA Res.">
        <title>Structural analysis of Arabidopsis thaliana chromosome 5. VIII. Sequence features of the regions of 1,081,958 bp covered by seventeen physically assigned P1 and TAC clones.</title>
        <authorList>
            <person name="Asamizu E."/>
            <person name="Sato S."/>
            <person name="Kaneko T."/>
            <person name="Nakamura Y."/>
            <person name="Kotani H."/>
            <person name="Miyajima N."/>
            <person name="Tabata S."/>
        </authorList>
    </citation>
    <scope>NUCLEOTIDE SEQUENCE [LARGE SCALE GENOMIC DNA]</scope>
    <source>
        <strain>cv. Columbia</strain>
    </source>
</reference>
<reference key="2">
    <citation type="journal article" date="2017" name="Plant J.">
        <title>Araport11: a complete reannotation of the Arabidopsis thaliana reference genome.</title>
        <authorList>
            <person name="Cheng C.Y."/>
            <person name="Krishnakumar V."/>
            <person name="Chan A.P."/>
            <person name="Thibaud-Nissen F."/>
            <person name="Schobel S."/>
            <person name="Town C.D."/>
        </authorList>
    </citation>
    <scope>GENOME REANNOTATION</scope>
    <source>
        <strain>cv. Columbia</strain>
    </source>
</reference>
<reference key="3">
    <citation type="journal article" date="2013" name="Plant J.">
        <title>MAG2 and three MAG2-INTERACTING PROTEINs form an ER-localized complex to facilitate storage protein transport in Arabidopsis thaliana.</title>
        <authorList>
            <person name="Li L."/>
            <person name="Shimada T."/>
            <person name="Takahashi H."/>
            <person name="Koumoto Y."/>
            <person name="Shirakawa M."/>
            <person name="Takagi J."/>
            <person name="Zhao X."/>
            <person name="Tu B."/>
            <person name="Jin H."/>
            <person name="Shen Z."/>
            <person name="Han B."/>
            <person name="Jia M."/>
            <person name="Kondo M."/>
            <person name="Nishimura M."/>
            <person name="Hara-Nishimura I."/>
        </authorList>
    </citation>
    <scope>IDENTIFICATION BY MASS SPECTROMETRY</scope>
    <scope>FUNCTION</scope>
    <scope>INTERACTION WITH MAG2</scope>
    <scope>DISRUPTION PHENOTYPE</scope>
</reference>
<sequence>MESPGRKVLYEIRHHASLPYVPRYPPLPQADGTNSKGGLRSLVSIKGVSQLKEKWSEYWNPKKTNKPVSLFISPRGELVAVTSGNHVTILRKDDDYRKPCGNFTSSISGSFTSGVWSEKHDVLGLVDDSETLFFIRANGEEISQVTKRNLKVSAPVLGLMEDDSDLQPSCLCSFSILTSDGRIHHVEISREPSASAFSKHASNSVSKQFPNHVFCFDYHPDLSFLLIVGSVAGISSSGSSGSSCISLWRKCQNLGLELLSTTKFDGVYCENKDDQLAYPKTLISPQGSHVASLDSNGCVHIFQLDKARLTLSCCPSEDSSDSLKPDKSLQSWKESLRNVVDFTWWSDHALAILKRSGNISIFDISRCVIVQEDATIYSMPVVERVQKYEGHIFLLESSTQEAKSALANVDRDASEFHHTSEHSMLWRLISFTEKTIPEMYKILVEKCQYQEALDFSDSHGLDRDEVFKSRWLKSEKGVSDVSTILSKIKDKAFVLSECLDRIGPTEDSMKALLAHGLYLTNHYVFAKSEDQESQQLWEFRLARLRLLQFSERLDTYLGISMGRYSVQDYRKFRSNPINQAAISLAESGRIGALNLLFKRHPYSLVSFMLQILAAIPETVPVETYAHLLPGKSPPTSMAVREEDWVECEKMVKFINNLPENGKNDSLIQTEPIVRRCLGYNWPSSEELAAWYKSRARDIDSTTGLLDNCICLIDIACRKGISELEQFHEDLSYLHQIIYSDEIGGEICFSLSLAGWEHLSDYEKFKIMLEGVKADTVVRRLHEKAIPFMQKRFLGTNNQNVESFLVKWLKEMAAKSDMDLCSKVIDEGCIDLYTVCFFKDDVEAVDCALQCLYLCKVTDKWNVMATMLSKLPKINDKAGEDIQRRLKRAEGHIEAGRLLEFYQVPKPINYFLEVHLDEKGVKQILRLMLSKFVRRQPGRSDNDWACMWRDLRQLQEKAFYFLDLEFVLTEFCRGLLKAGKFSLARNYLKGTGSVALPSEKAESLVINAAKEYFFSAPSLASEEIWKARECLNIFSSSRTVKAEDDIIDAVTVRLPKLGVSLLPVQFKQVKDPMEIIKMAITGDPEAYLHGEELIEVAKLLGLNSSEDISSVKEAIAREAAIAGDMQLAFDLCLVLTKEGHGPIWDLGAAIARSPALEHMDISSRKQLLGFALGHCDDESISELLHAWKDFDLQGQCETLGMLSESNSPEFQKMDGVSCLTDFPQMLDGLSSDQQLDLDRAKDSISCVAKDMPVDDSVDLESLLKENGKLFSFAASHLPWLLKLGRNRKLDKSLVLDSIPGKQFVSIKATALITILSWLAKNGFAPKDELIAMITDSIIEHPVTKEEDVIGCSFLLNLVDASNAVEVIEKQLRIRGNYQEIRSIMSLGMIYSLLHDSGVECTAPIQRRELLQKNFERKQTESLADDMSKIDKLQSTFWKEWKHKLEEKMHDADRSRMLERIIPGVETERFLSHDIEYIKVAVFSLIESVKSEKKLILKDVLKLADTYGLKQSEVILRYLSSILCSEIWTNEDITAEILQVKEEILTFASDTIETISTIVYPAASGLNKQRLAYIYSLLSECYCHLAESKEASLLVQPNSSFAGLSNWYNVLKQECSRVSFIKDLDFKNISELGGLNFDSFNNEVHAHINEMNLEALAKMVETLSGLSMENSSKGLISCQDVYKQYIMNLLDTLESRRDLDFGSAESFQGFLGQLEKTYDHCRVYVRILEPLQAVEILKRHFTLVLPPNGSYMHIPDSSTWQECLILLINFWIRLADEMQEVKSSNPSLVENLTLSPECISSCFTLLIKLVMYDSLSPSQAWAAILVYLRSGLVGDCATEIFNFCRAMVFSGCGFGPISDVFSDMSSRYPTALQDLPHLYLSVLEPILQDLVSGAPETQNLYRLLSSLSNLEGNLEELKRVRLVVWKQLVIFSENLELPSQVRVYSLELMQFISGKNIKGSSSELQSNVMPWDGSAELLSSMQKTEAALNQALPDQADGSSRLTNTLVALKSSQVAVAAISPGLEISPEDLSTVETSVSCFSKLSAAVTTASQAEALLAILEGWEELFEAKNAELLPSNEATDQGNDWGDDDWNDGWETLQESEPVEKVKKECVVSAHPLHSCWLDIFRKYIALSMPENVLQLIDGSLQKPEEVIIEETEAESLTGILARTDPFLALKISLLLPYKQIRSQCLSVVEEQLKQEGIPELSSQSHHEVLLLVIYSGTLSTIISNACYGSVFSFLCYLIGKLSREFQEERITQADNRESNASSESRFISCFGQLMFPCFVSGLVKADQQILAGFLVTKFMHSNPSLSLINVAEASLRRYLDKQLESLEHLEDSFAESSDFETLKNTVSSLRGTSKEVIRSALASLSNCTNSR</sequence>
<comment type="function">
    <text evidence="1">Required for proper maturation of seed storage proteins. Forms a complex with MAG2, ZW10/MIP1 and MIP3 on the endoplasmic reticulum that may be responsible for efficient transport of seed storage proteins.</text>
</comment>
<comment type="subunit">
    <text evidence="1">Forms a complex with MAG2, ZW10/MIP1 and MIP3 on the endoplasmic reticulum.</text>
</comment>
<comment type="subcellular location">
    <subcellularLocation>
        <location evidence="3">Endoplasmic reticulum membrane</location>
        <topology evidence="3">Peripheral membrane protein</topology>
    </subcellularLocation>
</comment>
<comment type="alternative products">
    <event type="alternative splicing"/>
    <isoform>
        <id>Q9FIN7-1</id>
        <name>1</name>
        <sequence type="displayed"/>
    </isoform>
    <text>A number of isoforms are produced. According to EST sequences.</text>
</comment>
<comment type="disruption phenotype">
    <text evidence="1">Accumulation of the precursors of the two major storage proteins albumin 2S and globulin 12S in dry seeds.</text>
</comment>
<keyword id="KW-0025">Alternative splicing</keyword>
<keyword id="KW-0256">Endoplasmic reticulum</keyword>
<keyword id="KW-0472">Membrane</keyword>
<keyword id="KW-0653">Protein transport</keyword>
<keyword id="KW-1185">Reference proteome</keyword>
<keyword id="KW-0813">Transport</keyword>
<proteinExistence type="evidence at protein level"/>